<sequence length="793" mass="87925">MSNQMEFIMQLYMMNLMKQQQQMQLQLPQQQQQQQLAGYTYTQNEDISSSTSVQQQQQQQQEQLQQPQPDLRKTRTHKRISSQNTNCSSSRSCSPNSNLIAFQPQQYPGATAATPSTPNSHPSNLVNQMLLQSLPPLTQLMLQQQQQQHLLTTSNLLLTPTHTPSSLGKQDPLQHPLLLGQFAGSEQMATNNFLQSSTVTSTPIEREKAATPAPSAGATAGNLSAAQVKFEQESADDDEDDDKPLSSLTSCSSSGHTNASSEKLLLSGVHPLESTTDSLDSPSMYTPVKQPADSSYGLITPVDSDLTPNTPLQPTQTISLLTPPSSEQSKSLVSLSAASGLDALLQNEEVLKNLRKVSSYLECENSLCRQENLREHFHCHEEPCQGKILSKKDDIIRHLKWHKKRKESLKLGFARFSSSDDCAPAYGEGCAYNWKQTHYHCVYEHCPKVYVSTSDVQMHANFHRKDSEIVNEGFRRFRAHETCRIEDCPFFGKKISHYHCCREGCTHTFKNKADMDKHKTYHLKDHQLKMDGFKKILKTEVCPFDACKFSTVCNHIHCVREGCDYILHSSSQMISHKRKHDRQDGEQAYQQFKIKQDVEESSLDAMPQQQQQQQQQQPTSLSQSQSSSSVCGGSNTSTPLSSLSAEHFLARKRGRPPKKIQLPADAQQSEAKRLKVEDESSNPAMLLPQSQPAAAVHPLTSGLFPGLLPAAAAPGVDPTAPNFQLTHLMALFQLQNPLFYQNLYPGMTQNSSMLGNLAALSAASAAAAAAAAANGAGVQQPKAEFSFKPEFKE</sequence>
<proteinExistence type="evidence at protein level"/>
<name>CAS_DROME</name>
<dbReference type="EMBL" id="L04487">
    <property type="status" value="NOT_ANNOTATED_CDS"/>
    <property type="molecule type" value="mRNA"/>
</dbReference>
<dbReference type="EMBL" id="AE014297">
    <property type="protein sequence ID" value="AAF51966.1"/>
    <property type="molecule type" value="Genomic_DNA"/>
</dbReference>
<dbReference type="EMBL" id="AY051865">
    <property type="protein sequence ID" value="AAK93289.1"/>
    <property type="molecule type" value="mRNA"/>
</dbReference>
<dbReference type="EMBL" id="Z15091">
    <property type="status" value="NOT_ANNOTATED_CDS"/>
    <property type="molecule type" value="mRNA"/>
</dbReference>
<dbReference type="PIR" id="A49129">
    <property type="entry name" value="A49129"/>
</dbReference>
<dbReference type="PIR" id="JH0797">
    <property type="entry name" value="JH0797"/>
</dbReference>
<dbReference type="RefSeq" id="NP_524677.1">
    <property type="nucleotide sequence ID" value="NM_079938.4"/>
</dbReference>
<dbReference type="BioGRID" id="68781">
    <property type="interactions" value="11"/>
</dbReference>
<dbReference type="FunCoup" id="Q7M3M8">
    <property type="interactions" value="30"/>
</dbReference>
<dbReference type="IntAct" id="Q7M3M8">
    <property type="interactions" value="5"/>
</dbReference>
<dbReference type="STRING" id="7227.FBpp0078374"/>
<dbReference type="GlyGen" id="Q7M3M8">
    <property type="glycosylation" value="2 sites"/>
</dbReference>
<dbReference type="iPTMnet" id="Q7M3M8"/>
<dbReference type="PaxDb" id="7227-FBpp0078374"/>
<dbReference type="EnsemblMetazoa" id="FBtr0078725">
    <property type="protein sequence ID" value="FBpp0078374"/>
    <property type="gene ID" value="FBgn0004878"/>
</dbReference>
<dbReference type="GeneID" id="44018"/>
<dbReference type="KEGG" id="dme:Dmel_CG2102"/>
<dbReference type="UCSC" id="CG2102-RA">
    <property type="organism name" value="d. melanogaster"/>
</dbReference>
<dbReference type="AGR" id="FB:FBgn0004878"/>
<dbReference type="CTD" id="44018"/>
<dbReference type="FlyBase" id="FBgn0004878">
    <property type="gene designation" value="cas"/>
</dbReference>
<dbReference type="VEuPathDB" id="VectorBase:FBgn0004878"/>
<dbReference type="eggNOG" id="KOG4377">
    <property type="taxonomic scope" value="Eukaryota"/>
</dbReference>
<dbReference type="GeneTree" id="ENSGT00390000008187"/>
<dbReference type="InParanoid" id="Q7M3M8"/>
<dbReference type="OMA" id="MTQNPSM"/>
<dbReference type="OrthoDB" id="10063916at2759"/>
<dbReference type="PhylomeDB" id="Q7M3M8"/>
<dbReference type="BioGRID-ORCS" id="44018">
    <property type="hits" value="0 hits in 1 CRISPR screen"/>
</dbReference>
<dbReference type="ChiTaRS" id="caz">
    <property type="organism name" value="fly"/>
</dbReference>
<dbReference type="GenomeRNAi" id="44018"/>
<dbReference type="PRO" id="PR:Q7M3M8"/>
<dbReference type="Proteomes" id="UP000000803">
    <property type="component" value="Chromosome 3R"/>
</dbReference>
<dbReference type="Bgee" id="FBgn0004878">
    <property type="expression patterns" value="Expressed in polar follicle cell (Drosophila) in post-embryonic organism and 47 other cell types or tissues"/>
</dbReference>
<dbReference type="ExpressionAtlas" id="Q7M3M8">
    <property type="expression patterns" value="baseline and differential"/>
</dbReference>
<dbReference type="GO" id="GO:0005634">
    <property type="term" value="C:nucleus"/>
    <property type="evidence" value="ECO:0000314"/>
    <property type="project" value="UniProtKB"/>
</dbReference>
<dbReference type="GO" id="GO:0003677">
    <property type="term" value="F:DNA binding"/>
    <property type="evidence" value="ECO:0000314"/>
    <property type="project" value="UniProtKB"/>
</dbReference>
<dbReference type="GO" id="GO:0003700">
    <property type="term" value="F:DNA-binding transcription factor activity"/>
    <property type="evidence" value="ECO:0000303"/>
    <property type="project" value="UniProtKB"/>
</dbReference>
<dbReference type="GO" id="GO:0000981">
    <property type="term" value="F:DNA-binding transcription factor activity, RNA polymerase II-specific"/>
    <property type="evidence" value="ECO:0000318"/>
    <property type="project" value="GO_Central"/>
</dbReference>
<dbReference type="GO" id="GO:0000977">
    <property type="term" value="F:RNA polymerase II transcription regulatory region sequence-specific DNA binding"/>
    <property type="evidence" value="ECO:0000318"/>
    <property type="project" value="GO_Central"/>
</dbReference>
<dbReference type="GO" id="GO:0008270">
    <property type="term" value="F:zinc ion binding"/>
    <property type="evidence" value="ECO:0007669"/>
    <property type="project" value="UniProtKB-KW"/>
</dbReference>
<dbReference type="GO" id="GO:0007417">
    <property type="term" value="P:central nervous system development"/>
    <property type="evidence" value="ECO:0000315"/>
    <property type="project" value="UniProtKB"/>
</dbReference>
<dbReference type="GO" id="GO:0007402">
    <property type="term" value="P:ganglion mother cell fate determination"/>
    <property type="evidence" value="ECO:0000304"/>
    <property type="project" value="FlyBase"/>
</dbReference>
<dbReference type="GO" id="GO:0048699">
    <property type="term" value="P:generation of neurons"/>
    <property type="evidence" value="ECO:0000315"/>
    <property type="project" value="FlyBase"/>
</dbReference>
<dbReference type="GO" id="GO:0021782">
    <property type="term" value="P:glial cell development"/>
    <property type="evidence" value="ECO:0000315"/>
    <property type="project" value="FlyBase"/>
</dbReference>
<dbReference type="GO" id="GO:0016319">
    <property type="term" value="P:mushroom body development"/>
    <property type="evidence" value="ECO:0000315"/>
    <property type="project" value="FlyBase"/>
</dbReference>
<dbReference type="GO" id="GO:0045892">
    <property type="term" value="P:negative regulation of DNA-templated transcription"/>
    <property type="evidence" value="ECO:0000315"/>
    <property type="project" value="UniProtKB"/>
</dbReference>
<dbReference type="GO" id="GO:0014019">
    <property type="term" value="P:neuroblast development"/>
    <property type="evidence" value="ECO:0000315"/>
    <property type="project" value="FlyBase"/>
</dbReference>
<dbReference type="GO" id="GO:0045944">
    <property type="term" value="P:positive regulation of transcription by RNA polymerase II"/>
    <property type="evidence" value="ECO:0000318"/>
    <property type="project" value="GO_Central"/>
</dbReference>
<dbReference type="GO" id="GO:0009791">
    <property type="term" value="P:post-embryonic development"/>
    <property type="evidence" value="ECO:0000315"/>
    <property type="project" value="FlyBase"/>
</dbReference>
<dbReference type="GO" id="GO:0040034">
    <property type="term" value="P:regulation of development, heterochronic"/>
    <property type="evidence" value="ECO:0000303"/>
    <property type="project" value="FlyBase"/>
</dbReference>
<dbReference type="GO" id="GO:0006355">
    <property type="term" value="P:regulation of DNA-templated transcription"/>
    <property type="evidence" value="ECO:0000303"/>
    <property type="project" value="UniProtKB"/>
</dbReference>
<dbReference type="GO" id="GO:2000177">
    <property type="term" value="P:regulation of neural precursor cell proliferation"/>
    <property type="evidence" value="ECO:0000315"/>
    <property type="project" value="FlyBase"/>
</dbReference>
<dbReference type="GO" id="GO:0045664">
    <property type="term" value="P:regulation of neuron differentiation"/>
    <property type="evidence" value="ECO:0000318"/>
    <property type="project" value="GO_Central"/>
</dbReference>
<dbReference type="GO" id="GO:0007419">
    <property type="term" value="P:ventral cord development"/>
    <property type="evidence" value="ECO:0007001"/>
    <property type="project" value="FlyBase"/>
</dbReference>
<dbReference type="InterPro" id="IPR040373">
    <property type="entry name" value="CASZ1"/>
</dbReference>
<dbReference type="InterPro" id="IPR013087">
    <property type="entry name" value="Znf_C2H2_type"/>
</dbReference>
<dbReference type="PANTHER" id="PTHR12451">
    <property type="entry name" value="TRANSCRIPTION FACTOR CASTOR PROTEIN MING -RELATED"/>
    <property type="match status" value="1"/>
</dbReference>
<dbReference type="PANTHER" id="PTHR12451:SF0">
    <property type="entry name" value="ZINC FINGER PROTEIN CASTOR HOMOLOG 1"/>
    <property type="match status" value="1"/>
</dbReference>
<dbReference type="SMART" id="SM00355">
    <property type="entry name" value="ZnF_C2H2"/>
    <property type="match status" value="4"/>
</dbReference>
<dbReference type="PROSITE" id="PS00028">
    <property type="entry name" value="ZINC_FINGER_C2H2_1"/>
    <property type="match status" value="3"/>
</dbReference>
<dbReference type="PROSITE" id="PS50157">
    <property type="entry name" value="ZINC_FINGER_C2H2_2"/>
    <property type="match status" value="2"/>
</dbReference>
<keyword id="KW-0217">Developmental protein</keyword>
<keyword id="KW-0221">Differentiation</keyword>
<keyword id="KW-0238">DNA-binding</keyword>
<keyword id="KW-0479">Metal-binding</keyword>
<keyword id="KW-0524">Neurogenesis</keyword>
<keyword id="KW-0539">Nucleus</keyword>
<keyword id="KW-0597">Phosphoprotein</keyword>
<keyword id="KW-1185">Reference proteome</keyword>
<keyword id="KW-0677">Repeat</keyword>
<keyword id="KW-0678">Repressor</keyword>
<keyword id="KW-0804">Transcription</keyword>
<keyword id="KW-0805">Transcription regulation</keyword>
<keyword id="KW-0862">Zinc</keyword>
<keyword id="KW-0863">Zinc-finger</keyword>
<feature type="chain" id="PRO_0000046911" description="Transcription factor castor">
    <location>
        <begin position="1"/>
        <end position="793"/>
    </location>
</feature>
<feature type="zinc finger region" description="C2H2-type 1; atypical" evidence="1">
    <location>
        <begin position="377"/>
        <end position="402"/>
    </location>
</feature>
<feature type="zinc finger region" description="C2H2-type 2" evidence="1">
    <location>
        <begin position="439"/>
        <end position="463"/>
    </location>
</feature>
<feature type="zinc finger region" description="C2H2-type 3" evidence="1">
    <location>
        <begin position="498"/>
        <end position="522"/>
    </location>
</feature>
<feature type="zinc finger region" description="C2H2-type 4" evidence="1">
    <location>
        <begin position="556"/>
        <end position="580"/>
    </location>
</feature>
<feature type="DNA-binding region" description="A.T hook">
    <location>
        <begin position="650"/>
        <end position="662"/>
    </location>
</feature>
<feature type="region of interest" description="Disordered" evidence="2">
    <location>
        <begin position="44"/>
        <end position="101"/>
    </location>
</feature>
<feature type="region of interest" description="Disordered" evidence="2">
    <location>
        <begin position="199"/>
        <end position="259"/>
    </location>
</feature>
<feature type="region of interest" description="Disordered" evidence="2">
    <location>
        <begin position="272"/>
        <end position="296"/>
    </location>
</feature>
<feature type="region of interest" description="Disordered" evidence="2">
    <location>
        <begin position="599"/>
        <end position="682"/>
    </location>
</feature>
<feature type="compositionally biased region" description="Polar residues" evidence="2">
    <location>
        <begin position="44"/>
        <end position="53"/>
    </location>
</feature>
<feature type="compositionally biased region" description="Low complexity" evidence="2">
    <location>
        <begin position="54"/>
        <end position="68"/>
    </location>
</feature>
<feature type="compositionally biased region" description="Low complexity" evidence="2">
    <location>
        <begin position="81"/>
        <end position="98"/>
    </location>
</feature>
<feature type="compositionally biased region" description="Low complexity" evidence="2">
    <location>
        <begin position="210"/>
        <end position="221"/>
    </location>
</feature>
<feature type="compositionally biased region" description="Acidic residues" evidence="2">
    <location>
        <begin position="233"/>
        <end position="242"/>
    </location>
</feature>
<feature type="compositionally biased region" description="Low complexity" evidence="2">
    <location>
        <begin position="245"/>
        <end position="254"/>
    </location>
</feature>
<feature type="compositionally biased region" description="Polar residues" evidence="2">
    <location>
        <begin position="273"/>
        <end position="284"/>
    </location>
</feature>
<feature type="compositionally biased region" description="Low complexity" evidence="2">
    <location>
        <begin position="608"/>
        <end position="629"/>
    </location>
</feature>
<feature type="compositionally biased region" description="Polar residues" evidence="2">
    <location>
        <begin position="630"/>
        <end position="644"/>
    </location>
</feature>
<feature type="modified residue" description="Phosphothreonine" evidence="6">
    <location>
        <position position="211"/>
    </location>
</feature>
<feature type="modified residue" description="Phosphoserine" evidence="6">
    <location>
        <position position="215"/>
    </location>
</feature>
<feature type="sequence conflict" description="In Ref. 1; L04487." evidence="9" ref="1">
    <original>Q</original>
    <variation>E</variation>
    <location>
        <position position="54"/>
    </location>
</feature>
<feature type="sequence conflict" description="In Ref. 1; L04487." evidence="9" ref="1">
    <original>R</original>
    <variation>A</variation>
    <location>
        <position position="79"/>
    </location>
</feature>
<feature type="sequence conflict" description="In Ref. 1; L04487." evidence="9" ref="1">
    <original>A</original>
    <variation>G</variation>
    <location>
        <position position="112"/>
    </location>
</feature>
<feature type="sequence conflict" description="In Ref. 1; L04487." evidence="9" ref="1">
    <original>G</original>
    <variation>R</variation>
    <location>
        <position position="221"/>
    </location>
</feature>
<feature type="sequence conflict" description="In Ref. 1; L04487." evidence="9" ref="1">
    <original>S</original>
    <variation>T</variation>
    <location>
        <position position="634"/>
    </location>
</feature>
<feature type="sequence conflict" description="In Ref. 1; L04487." evidence="9" ref="1">
    <original>A</original>
    <variation>R</variation>
    <location>
        <position position="710"/>
    </location>
</feature>
<feature type="sequence conflict" description="In Ref. 1; L04487." evidence="9" ref="1">
    <original>Q</original>
    <variation>R</variation>
    <location>
        <position position="724"/>
    </location>
</feature>
<organism>
    <name type="scientific">Drosophila melanogaster</name>
    <name type="common">Fruit fly</name>
    <dbReference type="NCBI Taxonomy" id="7227"/>
    <lineage>
        <taxon>Eukaryota</taxon>
        <taxon>Metazoa</taxon>
        <taxon>Ecdysozoa</taxon>
        <taxon>Arthropoda</taxon>
        <taxon>Hexapoda</taxon>
        <taxon>Insecta</taxon>
        <taxon>Pterygota</taxon>
        <taxon>Neoptera</taxon>
        <taxon>Endopterygota</taxon>
        <taxon>Diptera</taxon>
        <taxon>Brachycera</taxon>
        <taxon>Muscomorpha</taxon>
        <taxon>Ephydroidea</taxon>
        <taxon>Drosophilidae</taxon>
        <taxon>Drosophila</taxon>
        <taxon>Sophophora</taxon>
    </lineage>
</organism>
<gene>
    <name type="primary">cas</name>
    <name type="synonym">ming</name>
    <name type="ORF">CG2102</name>
</gene>
<evidence type="ECO:0000255" key="1">
    <source>
        <dbReference type="PROSITE-ProRule" id="PRU00042"/>
    </source>
</evidence>
<evidence type="ECO:0000256" key="2">
    <source>
        <dbReference type="SAM" id="MobiDB-lite"/>
    </source>
</evidence>
<evidence type="ECO:0000269" key="3">
    <source>
    </source>
</evidence>
<evidence type="ECO:0000269" key="4">
    <source>
    </source>
</evidence>
<evidence type="ECO:0000269" key="5">
    <source>
    </source>
</evidence>
<evidence type="ECO:0000269" key="6">
    <source>
    </source>
</evidence>
<evidence type="ECO:0000269" key="7">
    <source>
    </source>
</evidence>
<evidence type="ECO:0000269" key="8">
    <source>
    </source>
</evidence>
<evidence type="ECO:0000305" key="9"/>
<reference key="1">
    <citation type="journal article" date="1992" name="Neuron">
        <title>Castor encodes a novel zinc finger protein required for the development of a subset of CNS neurons in Drosophila.</title>
        <authorList>
            <person name="Mellerick D.M."/>
            <person name="Kassis J.A."/>
            <person name="Zhang S.-D."/>
            <person name="Odenwald W.F."/>
        </authorList>
    </citation>
    <scope>NUCLEOTIDE SEQUENCE [MRNA]</scope>
    <scope>FUNCTION</scope>
    <scope>TISSUE SPECIFICITY</scope>
    <scope>DEVELOPMENTAL STAGE</scope>
    <source>
        <strain>Oregon-R</strain>
        <tissue>Embryo</tissue>
    </source>
</reference>
<reference key="2">
    <citation type="journal article" date="2000" name="Science">
        <title>The genome sequence of Drosophila melanogaster.</title>
        <authorList>
            <person name="Adams M.D."/>
            <person name="Celniker S.E."/>
            <person name="Holt R.A."/>
            <person name="Evans C.A."/>
            <person name="Gocayne J.D."/>
            <person name="Amanatides P.G."/>
            <person name="Scherer S.E."/>
            <person name="Li P.W."/>
            <person name="Hoskins R.A."/>
            <person name="Galle R.F."/>
            <person name="George R.A."/>
            <person name="Lewis S.E."/>
            <person name="Richards S."/>
            <person name="Ashburner M."/>
            <person name="Henderson S.N."/>
            <person name="Sutton G.G."/>
            <person name="Wortman J.R."/>
            <person name="Yandell M.D."/>
            <person name="Zhang Q."/>
            <person name="Chen L.X."/>
            <person name="Brandon R.C."/>
            <person name="Rogers Y.-H.C."/>
            <person name="Blazej R.G."/>
            <person name="Champe M."/>
            <person name="Pfeiffer B.D."/>
            <person name="Wan K.H."/>
            <person name="Doyle C."/>
            <person name="Baxter E.G."/>
            <person name="Helt G."/>
            <person name="Nelson C.R."/>
            <person name="Miklos G.L.G."/>
            <person name="Abril J.F."/>
            <person name="Agbayani A."/>
            <person name="An H.-J."/>
            <person name="Andrews-Pfannkoch C."/>
            <person name="Baldwin D."/>
            <person name="Ballew R.M."/>
            <person name="Basu A."/>
            <person name="Baxendale J."/>
            <person name="Bayraktaroglu L."/>
            <person name="Beasley E.M."/>
            <person name="Beeson K.Y."/>
            <person name="Benos P.V."/>
            <person name="Berman B.P."/>
            <person name="Bhandari D."/>
            <person name="Bolshakov S."/>
            <person name="Borkova D."/>
            <person name="Botchan M.R."/>
            <person name="Bouck J."/>
            <person name="Brokstein P."/>
            <person name="Brottier P."/>
            <person name="Burtis K.C."/>
            <person name="Busam D.A."/>
            <person name="Butler H."/>
            <person name="Cadieu E."/>
            <person name="Center A."/>
            <person name="Chandra I."/>
            <person name="Cherry J.M."/>
            <person name="Cawley S."/>
            <person name="Dahlke C."/>
            <person name="Davenport L.B."/>
            <person name="Davies P."/>
            <person name="de Pablos B."/>
            <person name="Delcher A."/>
            <person name="Deng Z."/>
            <person name="Mays A.D."/>
            <person name="Dew I."/>
            <person name="Dietz S.M."/>
            <person name="Dodson K."/>
            <person name="Doup L.E."/>
            <person name="Downes M."/>
            <person name="Dugan-Rocha S."/>
            <person name="Dunkov B.C."/>
            <person name="Dunn P."/>
            <person name="Durbin K.J."/>
            <person name="Evangelista C.C."/>
            <person name="Ferraz C."/>
            <person name="Ferriera S."/>
            <person name="Fleischmann W."/>
            <person name="Fosler C."/>
            <person name="Gabrielian A.E."/>
            <person name="Garg N.S."/>
            <person name="Gelbart W.M."/>
            <person name="Glasser K."/>
            <person name="Glodek A."/>
            <person name="Gong F."/>
            <person name="Gorrell J.H."/>
            <person name="Gu Z."/>
            <person name="Guan P."/>
            <person name="Harris M."/>
            <person name="Harris N.L."/>
            <person name="Harvey D.A."/>
            <person name="Heiman T.J."/>
            <person name="Hernandez J.R."/>
            <person name="Houck J."/>
            <person name="Hostin D."/>
            <person name="Houston K.A."/>
            <person name="Howland T.J."/>
            <person name="Wei M.-H."/>
            <person name="Ibegwam C."/>
            <person name="Jalali M."/>
            <person name="Kalush F."/>
            <person name="Karpen G.H."/>
            <person name="Ke Z."/>
            <person name="Kennison J.A."/>
            <person name="Ketchum K.A."/>
            <person name="Kimmel B.E."/>
            <person name="Kodira C.D."/>
            <person name="Kraft C.L."/>
            <person name="Kravitz S."/>
            <person name="Kulp D."/>
            <person name="Lai Z."/>
            <person name="Lasko P."/>
            <person name="Lei Y."/>
            <person name="Levitsky A.A."/>
            <person name="Li J.H."/>
            <person name="Li Z."/>
            <person name="Liang Y."/>
            <person name="Lin X."/>
            <person name="Liu X."/>
            <person name="Mattei B."/>
            <person name="McIntosh T.C."/>
            <person name="McLeod M.P."/>
            <person name="McPherson D."/>
            <person name="Merkulov G."/>
            <person name="Milshina N.V."/>
            <person name="Mobarry C."/>
            <person name="Morris J."/>
            <person name="Moshrefi A."/>
            <person name="Mount S.M."/>
            <person name="Moy M."/>
            <person name="Murphy B."/>
            <person name="Murphy L."/>
            <person name="Muzny D.M."/>
            <person name="Nelson D.L."/>
            <person name="Nelson D.R."/>
            <person name="Nelson K.A."/>
            <person name="Nixon K."/>
            <person name="Nusskern D.R."/>
            <person name="Pacleb J.M."/>
            <person name="Palazzolo M."/>
            <person name="Pittman G.S."/>
            <person name="Pan S."/>
            <person name="Pollard J."/>
            <person name="Puri V."/>
            <person name="Reese M.G."/>
            <person name="Reinert K."/>
            <person name="Remington K."/>
            <person name="Saunders R.D.C."/>
            <person name="Scheeler F."/>
            <person name="Shen H."/>
            <person name="Shue B.C."/>
            <person name="Siden-Kiamos I."/>
            <person name="Simpson M."/>
            <person name="Skupski M.P."/>
            <person name="Smith T.J."/>
            <person name="Spier E."/>
            <person name="Spradling A.C."/>
            <person name="Stapleton M."/>
            <person name="Strong R."/>
            <person name="Sun E."/>
            <person name="Svirskas R."/>
            <person name="Tector C."/>
            <person name="Turner R."/>
            <person name="Venter E."/>
            <person name="Wang A.H."/>
            <person name="Wang X."/>
            <person name="Wang Z.-Y."/>
            <person name="Wassarman D.A."/>
            <person name="Weinstock G.M."/>
            <person name="Weissenbach J."/>
            <person name="Williams S.M."/>
            <person name="Woodage T."/>
            <person name="Worley K.C."/>
            <person name="Wu D."/>
            <person name="Yang S."/>
            <person name="Yao Q.A."/>
            <person name="Ye J."/>
            <person name="Yeh R.-F."/>
            <person name="Zaveri J.S."/>
            <person name="Zhan M."/>
            <person name="Zhang G."/>
            <person name="Zhao Q."/>
            <person name="Zheng L."/>
            <person name="Zheng X.H."/>
            <person name="Zhong F.N."/>
            <person name="Zhong W."/>
            <person name="Zhou X."/>
            <person name="Zhu S.C."/>
            <person name="Zhu X."/>
            <person name="Smith H.O."/>
            <person name="Gibbs R.A."/>
            <person name="Myers E.W."/>
            <person name="Rubin G.M."/>
            <person name="Venter J.C."/>
        </authorList>
    </citation>
    <scope>NUCLEOTIDE SEQUENCE [LARGE SCALE GENOMIC DNA]</scope>
    <source>
        <strain>Berkeley</strain>
    </source>
</reference>
<reference key="3">
    <citation type="journal article" date="2002" name="Genome Biol.">
        <title>Annotation of the Drosophila melanogaster euchromatic genome: a systematic review.</title>
        <authorList>
            <person name="Misra S."/>
            <person name="Crosby M.A."/>
            <person name="Mungall C.J."/>
            <person name="Matthews B.B."/>
            <person name="Campbell K.S."/>
            <person name="Hradecky P."/>
            <person name="Huang Y."/>
            <person name="Kaminker J.S."/>
            <person name="Millburn G.H."/>
            <person name="Prochnik S.E."/>
            <person name="Smith C.D."/>
            <person name="Tupy J.L."/>
            <person name="Whitfield E.J."/>
            <person name="Bayraktaroglu L."/>
            <person name="Berman B.P."/>
            <person name="Bettencourt B.R."/>
            <person name="Celniker S.E."/>
            <person name="de Grey A.D.N.J."/>
            <person name="Drysdale R.A."/>
            <person name="Harris N.L."/>
            <person name="Richter J."/>
            <person name="Russo S."/>
            <person name="Schroeder A.J."/>
            <person name="Shu S.Q."/>
            <person name="Stapleton M."/>
            <person name="Yamada C."/>
            <person name="Ashburner M."/>
            <person name="Gelbart W.M."/>
            <person name="Rubin G.M."/>
            <person name="Lewis S.E."/>
        </authorList>
    </citation>
    <scope>GENOME REANNOTATION</scope>
    <source>
        <strain>Berkeley</strain>
    </source>
</reference>
<reference key="4">
    <citation type="journal article" date="2002" name="Genome Biol.">
        <title>A Drosophila full-length cDNA resource.</title>
        <authorList>
            <person name="Stapleton M."/>
            <person name="Carlson J.W."/>
            <person name="Brokstein P."/>
            <person name="Yu C."/>
            <person name="Champe M."/>
            <person name="George R.A."/>
            <person name="Guarin H."/>
            <person name="Kronmiller B."/>
            <person name="Pacleb J.M."/>
            <person name="Park S."/>
            <person name="Wan K.H."/>
            <person name="Rubin G.M."/>
            <person name="Celniker S.E."/>
        </authorList>
    </citation>
    <scope>NUCLEOTIDE SEQUENCE [LARGE SCALE MRNA]</scope>
    <source>
        <strain>Berkeley</strain>
        <tissue>Embryo</tissue>
    </source>
</reference>
<reference key="5">
    <citation type="journal article" date="1992" name="Development">
        <title>ming is expressed in neuroblast sublineages and regulates gene expression in the Drosophila central nervous system.</title>
        <authorList>
            <person name="Cui X."/>
            <person name="Doe C.Q."/>
        </authorList>
    </citation>
    <scope>NUCLEOTIDE SEQUENCE [MRNA] OF 281-660</scope>
    <scope>FUNCTION</scope>
    <scope>TISSUE SPECIFICITY</scope>
    <source>
        <tissue>Embryo</tissue>
    </source>
</reference>
<reference key="6">
    <citation type="journal article" date="1995" name="Development">
        <title>The role of the cell cycle and cytokinesis in regulating neuroblast sublineage gene expression in the Drosophila CNS.</title>
        <authorList>
            <person name="Cui X."/>
            <person name="Doe C.Q."/>
        </authorList>
    </citation>
    <scope>TISSUE SPECIFICITY</scope>
</reference>
<reference key="7">
    <citation type="journal article" date="1998" name="Genes Dev.">
        <title>Regulation of POU genes by castor and hunchback establishes layered compartments in the Drosophila CNS.</title>
        <authorList>
            <person name="Kambadur R."/>
            <person name="Koizumi K."/>
            <person name="Stivers C."/>
            <person name="Nagle J."/>
            <person name="Poole S.J."/>
            <person name="Odenwald W.F."/>
        </authorList>
    </citation>
    <scope>FUNCTION AS A REPRESSOR</scope>
    <scope>DNA-BINDING</scope>
    <scope>SUBCELLULAR LOCATION</scope>
</reference>
<reference key="8">
    <citation type="journal article" date="2001" name="Mech. Dev.">
        <title>The Drosophila castor gene is involved in postembryonic brain development.</title>
        <authorList>
            <person name="Hitier R."/>
            <person name="Chaminade M."/>
            <person name="Preat T."/>
        </authorList>
    </citation>
    <scope>TISSUE SPECIFICITY</scope>
</reference>
<reference key="9">
    <citation type="journal article" date="2007" name="Mol. Biosyst.">
        <title>An integrated chemical, mass spectrometric and computational strategy for (quantitative) phosphoproteomics: application to Drosophila melanogaster Kc167 cells.</title>
        <authorList>
            <person name="Bodenmiller B."/>
            <person name="Mueller L.N."/>
            <person name="Pedrioli P.G.A."/>
            <person name="Pflieger D."/>
            <person name="Juenger M.A."/>
            <person name="Eng J.K."/>
            <person name="Aebersold R."/>
            <person name="Tao W.A."/>
        </authorList>
    </citation>
    <scope>PHOSPHORYLATION [LARGE SCALE ANALYSIS] AT THR-211 AND SER-215</scope>
    <scope>IDENTIFICATION BY MASS SPECTROMETRY</scope>
</reference>
<accession>Q7M3M8</accession>
<accession>Q9VNH0</accession>
<protein>
    <recommendedName>
        <fullName>Transcription factor castor</fullName>
    </recommendedName>
    <alternativeName>
        <fullName>Protein ming</fullName>
    </alternativeName>
</protein>
<comment type="function">
    <text evidence="4 5 8">Transcription factor that specifies expression of key genes in developing central nervous system (CNS). Essential for many, if not all, late developing neuroblastoma (NB) sublineages. Binds to the 5'-[CG]C[CT][CT]AAAAA[AT]-3' DNA sequence, like hb, suggesting that cas and hb act as a late regulators in early and late CNS NB sublineage, respectively. Acts by repressing expression of nub/pdm-1 and pdm2/pdm-2 POU genes, and restrict their pattern of expression in appropriate cells. Required for a full expression of vvl/drifter and acj6/I-POU; it is however unknown whether it directly activates these genes. Controls engrailed (en) expression in the ventral nerve cord.</text>
</comment>
<comment type="subcellular location">
    <subcellularLocation>
        <location evidence="8">Nucleus</location>
    </subcellularLocation>
</comment>
<comment type="tissue specificity">
    <text evidence="3 4 5 7">Expressed in a specific subset of neuroblasts in the ventral nerve cord and the procephalic region in the embryo. Expressed in many, if not all, late delaminating NBs, and in early NBs, but only after they have undergone several rounds of ganglion mother cell-producing divisions.</text>
</comment>
<comment type="developmental stage">
    <text evidence="5">Expressed in embryos. Expressed from blastoderm embryos. Not expressed in first and second instar larvae. Weakly expressed in third instar larvae. May be weakly expressed in adults.</text>
</comment>
<comment type="sequence caution" evidence="9">
    <conflict type="frameshift">
        <sequence resource="EMBL" id="L04487"/>
    </conflict>
</comment>